<reference key="1">
    <citation type="journal article" date="2006" name="Genome Biol.">
        <title>Genomic analysis reveals that Pseudomonas aeruginosa virulence is combinatorial.</title>
        <authorList>
            <person name="Lee D.G."/>
            <person name="Urbach J.M."/>
            <person name="Wu G."/>
            <person name="Liberati N.T."/>
            <person name="Feinbaum R.L."/>
            <person name="Miyata S."/>
            <person name="Diggins L.T."/>
            <person name="He J."/>
            <person name="Saucier M."/>
            <person name="Deziel E."/>
            <person name="Friedman L."/>
            <person name="Li L."/>
            <person name="Grills G."/>
            <person name="Montgomery K."/>
            <person name="Kucherlapati R."/>
            <person name="Rahme L.G."/>
            <person name="Ausubel F.M."/>
        </authorList>
    </citation>
    <scope>NUCLEOTIDE SEQUENCE [LARGE SCALE GENOMIC DNA]</scope>
    <source>
        <strain>UCBPP-PA14</strain>
    </source>
</reference>
<name>NUOB_PSEAB</name>
<comment type="function">
    <text evidence="1">NDH-1 shuttles electrons from NADH, via FMN and iron-sulfur (Fe-S) centers, to quinones in the respiratory chain. The immediate electron acceptor for the enzyme in this species is believed to be ubiquinone. Couples the redox reaction to proton translocation (for every two electrons transferred, four hydrogen ions are translocated across the cytoplasmic membrane), and thus conserves the redox energy in a proton gradient.</text>
</comment>
<comment type="catalytic activity">
    <reaction evidence="1">
        <text>a quinone + NADH + 5 H(+)(in) = a quinol + NAD(+) + 4 H(+)(out)</text>
        <dbReference type="Rhea" id="RHEA:57888"/>
        <dbReference type="ChEBI" id="CHEBI:15378"/>
        <dbReference type="ChEBI" id="CHEBI:24646"/>
        <dbReference type="ChEBI" id="CHEBI:57540"/>
        <dbReference type="ChEBI" id="CHEBI:57945"/>
        <dbReference type="ChEBI" id="CHEBI:132124"/>
    </reaction>
</comment>
<comment type="cofactor">
    <cofactor evidence="1">
        <name>[4Fe-4S] cluster</name>
        <dbReference type="ChEBI" id="CHEBI:49883"/>
    </cofactor>
    <text evidence="1">Binds 1 [4Fe-4S] cluster.</text>
</comment>
<comment type="subunit">
    <text evidence="1">NDH-1 is composed of 13 different subunits. Subunits NuoB, CD, E, F, and G constitute the peripheral sector of the complex.</text>
</comment>
<comment type="subcellular location">
    <subcellularLocation>
        <location evidence="1">Cell inner membrane</location>
        <topology evidence="1">Peripheral membrane protein</topology>
        <orientation evidence="1">Cytoplasmic side</orientation>
    </subcellularLocation>
</comment>
<comment type="similarity">
    <text evidence="1">Belongs to the complex I 20 kDa subunit family.</text>
</comment>
<keyword id="KW-0004">4Fe-4S</keyword>
<keyword id="KW-0997">Cell inner membrane</keyword>
<keyword id="KW-1003">Cell membrane</keyword>
<keyword id="KW-0408">Iron</keyword>
<keyword id="KW-0411">Iron-sulfur</keyword>
<keyword id="KW-0472">Membrane</keyword>
<keyword id="KW-0479">Metal-binding</keyword>
<keyword id="KW-0520">NAD</keyword>
<keyword id="KW-0874">Quinone</keyword>
<keyword id="KW-1278">Translocase</keyword>
<keyword id="KW-0813">Transport</keyword>
<keyword id="KW-0830">Ubiquinone</keyword>
<gene>
    <name evidence="1" type="primary">nuoB</name>
    <name type="ordered locus">PA14_30010</name>
</gene>
<feature type="chain" id="PRO_1000166661" description="NADH-quinone oxidoreductase subunit B">
    <location>
        <begin position="1"/>
        <end position="225"/>
    </location>
</feature>
<feature type="binding site" evidence="1">
    <location>
        <position position="68"/>
    </location>
    <ligand>
        <name>[4Fe-4S] cluster</name>
        <dbReference type="ChEBI" id="CHEBI:49883"/>
    </ligand>
</feature>
<feature type="binding site" evidence="1">
    <location>
        <position position="69"/>
    </location>
    <ligand>
        <name>[4Fe-4S] cluster</name>
        <dbReference type="ChEBI" id="CHEBI:49883"/>
    </ligand>
</feature>
<feature type="binding site" evidence="1">
    <location>
        <position position="134"/>
    </location>
    <ligand>
        <name>[4Fe-4S] cluster</name>
        <dbReference type="ChEBI" id="CHEBI:49883"/>
    </ligand>
</feature>
<feature type="binding site" evidence="1">
    <location>
        <position position="163"/>
    </location>
    <ligand>
        <name>[4Fe-4S] cluster</name>
        <dbReference type="ChEBI" id="CHEBI:49883"/>
    </ligand>
</feature>
<protein>
    <recommendedName>
        <fullName evidence="1">NADH-quinone oxidoreductase subunit B</fullName>
        <ecNumber evidence="1">7.1.1.-</ecNumber>
    </recommendedName>
    <alternativeName>
        <fullName evidence="1">NADH dehydrogenase I subunit B</fullName>
    </alternativeName>
    <alternativeName>
        <fullName evidence="1">NDH-1 subunit B</fullName>
    </alternativeName>
</protein>
<organism>
    <name type="scientific">Pseudomonas aeruginosa (strain UCBPP-PA14)</name>
    <dbReference type="NCBI Taxonomy" id="208963"/>
    <lineage>
        <taxon>Bacteria</taxon>
        <taxon>Pseudomonadati</taxon>
        <taxon>Pseudomonadota</taxon>
        <taxon>Gammaproteobacteria</taxon>
        <taxon>Pseudomonadales</taxon>
        <taxon>Pseudomonadaceae</taxon>
        <taxon>Pseudomonas</taxon>
    </lineage>
</organism>
<evidence type="ECO:0000255" key="1">
    <source>
        <dbReference type="HAMAP-Rule" id="MF_01356"/>
    </source>
</evidence>
<accession>Q02ND0</accession>
<proteinExistence type="inferred from homology"/>
<dbReference type="EC" id="7.1.1.-" evidence="1"/>
<dbReference type="EMBL" id="CP000438">
    <property type="protein sequence ID" value="ABJ11861.1"/>
    <property type="molecule type" value="Genomic_DNA"/>
</dbReference>
<dbReference type="RefSeq" id="WP_003090455.1">
    <property type="nucleotide sequence ID" value="NZ_CP034244.1"/>
</dbReference>
<dbReference type="SMR" id="Q02ND0"/>
<dbReference type="KEGG" id="pau:PA14_30010"/>
<dbReference type="PseudoCAP" id="PA14_30010"/>
<dbReference type="HOGENOM" id="CLU_055737_7_3_6"/>
<dbReference type="BioCyc" id="PAER208963:G1G74-2512-MONOMER"/>
<dbReference type="Proteomes" id="UP000000653">
    <property type="component" value="Chromosome"/>
</dbReference>
<dbReference type="GO" id="GO:0005886">
    <property type="term" value="C:plasma membrane"/>
    <property type="evidence" value="ECO:0007669"/>
    <property type="project" value="UniProtKB-SubCell"/>
</dbReference>
<dbReference type="GO" id="GO:0045271">
    <property type="term" value="C:respiratory chain complex I"/>
    <property type="evidence" value="ECO:0007669"/>
    <property type="project" value="TreeGrafter"/>
</dbReference>
<dbReference type="GO" id="GO:0051539">
    <property type="term" value="F:4 iron, 4 sulfur cluster binding"/>
    <property type="evidence" value="ECO:0007669"/>
    <property type="project" value="UniProtKB-KW"/>
</dbReference>
<dbReference type="GO" id="GO:0005506">
    <property type="term" value="F:iron ion binding"/>
    <property type="evidence" value="ECO:0007669"/>
    <property type="project" value="UniProtKB-UniRule"/>
</dbReference>
<dbReference type="GO" id="GO:0008137">
    <property type="term" value="F:NADH dehydrogenase (ubiquinone) activity"/>
    <property type="evidence" value="ECO:0007669"/>
    <property type="project" value="InterPro"/>
</dbReference>
<dbReference type="GO" id="GO:0050136">
    <property type="term" value="F:NADH:ubiquinone reductase (non-electrogenic) activity"/>
    <property type="evidence" value="ECO:0007669"/>
    <property type="project" value="UniProtKB-UniRule"/>
</dbReference>
<dbReference type="GO" id="GO:0048038">
    <property type="term" value="F:quinone binding"/>
    <property type="evidence" value="ECO:0007669"/>
    <property type="project" value="UniProtKB-KW"/>
</dbReference>
<dbReference type="GO" id="GO:0009060">
    <property type="term" value="P:aerobic respiration"/>
    <property type="evidence" value="ECO:0007669"/>
    <property type="project" value="TreeGrafter"/>
</dbReference>
<dbReference type="GO" id="GO:0015990">
    <property type="term" value="P:electron transport coupled proton transport"/>
    <property type="evidence" value="ECO:0007669"/>
    <property type="project" value="TreeGrafter"/>
</dbReference>
<dbReference type="FunFam" id="3.40.50.12280:FF:000002">
    <property type="entry name" value="NADH-quinone oxidoreductase subunit B"/>
    <property type="match status" value="1"/>
</dbReference>
<dbReference type="Gene3D" id="3.40.50.12280">
    <property type="match status" value="1"/>
</dbReference>
<dbReference type="HAMAP" id="MF_01356">
    <property type="entry name" value="NDH1_NuoB"/>
    <property type="match status" value="1"/>
</dbReference>
<dbReference type="InterPro" id="IPR006137">
    <property type="entry name" value="NADH_UbQ_OxRdtase-like_20kDa"/>
</dbReference>
<dbReference type="InterPro" id="IPR006138">
    <property type="entry name" value="NADH_UQ_OxRdtase_20Kd_su"/>
</dbReference>
<dbReference type="NCBIfam" id="TIGR01957">
    <property type="entry name" value="nuoB_fam"/>
    <property type="match status" value="1"/>
</dbReference>
<dbReference type="NCBIfam" id="NF005012">
    <property type="entry name" value="PRK06411.1"/>
    <property type="match status" value="1"/>
</dbReference>
<dbReference type="PANTHER" id="PTHR11995">
    <property type="entry name" value="NADH DEHYDROGENASE"/>
    <property type="match status" value="1"/>
</dbReference>
<dbReference type="PANTHER" id="PTHR11995:SF14">
    <property type="entry name" value="NADH DEHYDROGENASE [UBIQUINONE] IRON-SULFUR PROTEIN 7, MITOCHONDRIAL"/>
    <property type="match status" value="1"/>
</dbReference>
<dbReference type="Pfam" id="PF01058">
    <property type="entry name" value="Oxidored_q6"/>
    <property type="match status" value="1"/>
</dbReference>
<dbReference type="SUPFAM" id="SSF56770">
    <property type="entry name" value="HydA/Nqo6-like"/>
    <property type="match status" value="1"/>
</dbReference>
<dbReference type="PROSITE" id="PS01150">
    <property type="entry name" value="COMPLEX1_20K"/>
    <property type="match status" value="1"/>
</dbReference>
<sequence>MQYKLTRIDPDAANDQYPIGERETVADPLVEGQVHKNIFMGKLEDVLNSTVNWGRKNSLWPYNFGLSCCYVEMTTAFTAPHDIARFGAEVIRASPRQADFMVIAGTCFIKMAPVIQRLYEQMLEPKWVISMGSCANSGGMYDIYSVVQGVDKFLPVDVYIPGCPPRPEAFLQGLMLLQESIGQERRPLSWVVGDQGVYRAEMPAQKDLKREQRIQVTNLRSPDEV</sequence>